<reference key="1">
    <citation type="journal article" date="2000" name="Nature">
        <title>Complete DNA sequence of a serogroup A strain of Neisseria meningitidis Z2491.</title>
        <authorList>
            <person name="Parkhill J."/>
            <person name="Achtman M."/>
            <person name="James K.D."/>
            <person name="Bentley S.D."/>
            <person name="Churcher C.M."/>
            <person name="Klee S.R."/>
            <person name="Morelli G."/>
            <person name="Basham D."/>
            <person name="Brown D."/>
            <person name="Chillingworth T."/>
            <person name="Davies R.M."/>
            <person name="Davis P."/>
            <person name="Devlin K."/>
            <person name="Feltwell T."/>
            <person name="Hamlin N."/>
            <person name="Holroyd S."/>
            <person name="Jagels K."/>
            <person name="Leather S."/>
            <person name="Moule S."/>
            <person name="Mungall K.L."/>
            <person name="Quail M.A."/>
            <person name="Rajandream M.A."/>
            <person name="Rutherford K.M."/>
            <person name="Simmonds M."/>
            <person name="Skelton J."/>
            <person name="Whitehead S."/>
            <person name="Spratt B.G."/>
            <person name="Barrell B.G."/>
        </authorList>
    </citation>
    <scope>NUCLEOTIDE SEQUENCE [LARGE SCALE GENOMIC DNA]</scope>
    <source>
        <strain>DSM 15465 / Z2491</strain>
    </source>
</reference>
<protein>
    <recommendedName>
        <fullName evidence="1">Large ribosomal subunit protein uL3</fullName>
    </recommendedName>
    <alternativeName>
        <fullName evidence="3">50S ribosomal protein L3</fullName>
    </alternativeName>
</protein>
<accession>P60443</accession>
<accession>A1INZ0</accession>
<accession>Q9JRH6</accession>
<organism>
    <name type="scientific">Neisseria meningitidis serogroup A / serotype 4A (strain DSM 15465 / Z2491)</name>
    <dbReference type="NCBI Taxonomy" id="122587"/>
    <lineage>
        <taxon>Bacteria</taxon>
        <taxon>Pseudomonadati</taxon>
        <taxon>Pseudomonadota</taxon>
        <taxon>Betaproteobacteria</taxon>
        <taxon>Neisseriales</taxon>
        <taxon>Neisseriaceae</taxon>
        <taxon>Neisseria</taxon>
    </lineage>
</organism>
<dbReference type="EMBL" id="AL157959">
    <property type="protein sequence ID" value="CAM07447.1"/>
    <property type="molecule type" value="Genomic_DNA"/>
</dbReference>
<dbReference type="RefSeq" id="WP_002215400.1">
    <property type="nucleotide sequence ID" value="NC_003116.1"/>
</dbReference>
<dbReference type="SMR" id="P60443"/>
<dbReference type="EnsemblBacteria" id="CAM07447">
    <property type="protein sequence ID" value="CAM07447"/>
    <property type="gene ID" value="NMA0129"/>
</dbReference>
<dbReference type="GeneID" id="93387217"/>
<dbReference type="KEGG" id="nma:NMA0129"/>
<dbReference type="HOGENOM" id="CLU_044142_4_1_4"/>
<dbReference type="Proteomes" id="UP000000626">
    <property type="component" value="Chromosome"/>
</dbReference>
<dbReference type="GO" id="GO:0022625">
    <property type="term" value="C:cytosolic large ribosomal subunit"/>
    <property type="evidence" value="ECO:0007669"/>
    <property type="project" value="TreeGrafter"/>
</dbReference>
<dbReference type="GO" id="GO:0019843">
    <property type="term" value="F:rRNA binding"/>
    <property type="evidence" value="ECO:0007669"/>
    <property type="project" value="UniProtKB-UniRule"/>
</dbReference>
<dbReference type="GO" id="GO:0003735">
    <property type="term" value="F:structural constituent of ribosome"/>
    <property type="evidence" value="ECO:0007669"/>
    <property type="project" value="InterPro"/>
</dbReference>
<dbReference type="GO" id="GO:0006412">
    <property type="term" value="P:translation"/>
    <property type="evidence" value="ECO:0007669"/>
    <property type="project" value="UniProtKB-UniRule"/>
</dbReference>
<dbReference type="FunFam" id="2.40.30.10:FF:000004">
    <property type="entry name" value="50S ribosomal protein L3"/>
    <property type="match status" value="1"/>
</dbReference>
<dbReference type="FunFam" id="3.30.160.810:FF:000001">
    <property type="entry name" value="50S ribosomal protein L3"/>
    <property type="match status" value="1"/>
</dbReference>
<dbReference type="Gene3D" id="3.30.160.810">
    <property type="match status" value="1"/>
</dbReference>
<dbReference type="Gene3D" id="2.40.30.10">
    <property type="entry name" value="Translation factors"/>
    <property type="match status" value="1"/>
</dbReference>
<dbReference type="HAMAP" id="MF_01325_B">
    <property type="entry name" value="Ribosomal_uL3_B"/>
    <property type="match status" value="1"/>
</dbReference>
<dbReference type="InterPro" id="IPR000597">
    <property type="entry name" value="Ribosomal_uL3"/>
</dbReference>
<dbReference type="InterPro" id="IPR019927">
    <property type="entry name" value="Ribosomal_uL3_bac/org-type"/>
</dbReference>
<dbReference type="InterPro" id="IPR019926">
    <property type="entry name" value="Ribosomal_uL3_CS"/>
</dbReference>
<dbReference type="InterPro" id="IPR009000">
    <property type="entry name" value="Transl_B-barrel_sf"/>
</dbReference>
<dbReference type="NCBIfam" id="TIGR03625">
    <property type="entry name" value="L3_bact"/>
    <property type="match status" value="1"/>
</dbReference>
<dbReference type="PANTHER" id="PTHR11229">
    <property type="entry name" value="50S RIBOSOMAL PROTEIN L3"/>
    <property type="match status" value="1"/>
</dbReference>
<dbReference type="PANTHER" id="PTHR11229:SF16">
    <property type="entry name" value="LARGE RIBOSOMAL SUBUNIT PROTEIN UL3C"/>
    <property type="match status" value="1"/>
</dbReference>
<dbReference type="Pfam" id="PF00297">
    <property type="entry name" value="Ribosomal_L3"/>
    <property type="match status" value="1"/>
</dbReference>
<dbReference type="SUPFAM" id="SSF50447">
    <property type="entry name" value="Translation proteins"/>
    <property type="match status" value="1"/>
</dbReference>
<dbReference type="PROSITE" id="PS00474">
    <property type="entry name" value="RIBOSOMAL_L3"/>
    <property type="match status" value="1"/>
</dbReference>
<sequence>MTLGLVGRKVGMTRVFDEQGVSVPVTVLDMSANRVTQVKSKDTDGYTAVQVTFGQKKANRVNKAEAGHFAKAGVEAGRGLIEFALTEEKLAELKAGDEITVSMFEVGQLVDVTGTSKGKGFSGTIKRHNFGAQRTSHGNSRSHRVPGSIGMAQDPGRVFPGKRMAGQYGNTKATVQKLEVVRVDAERQLLLVKGAVPGAVNSDVVVRPSVKVGA</sequence>
<comment type="function">
    <text evidence="1">One of the primary rRNA binding proteins, it binds directly near the 3'-end of the 23S rRNA, where it nucleates assembly of the 50S subunit.</text>
</comment>
<comment type="subunit">
    <text evidence="1">Part of the 50S ribosomal subunit. Forms a cluster with proteins L14 and L19.</text>
</comment>
<comment type="PTM">
    <text evidence="1">Methylated by PrmB.</text>
</comment>
<comment type="similarity">
    <text evidence="1">Belongs to the universal ribosomal protein uL3 family.</text>
</comment>
<gene>
    <name evidence="1" type="primary">rplC</name>
    <name type="ordered locus">NMA0129</name>
</gene>
<name>RL3_NEIMA</name>
<evidence type="ECO:0000255" key="1">
    <source>
        <dbReference type="HAMAP-Rule" id="MF_01325"/>
    </source>
</evidence>
<evidence type="ECO:0000256" key="2">
    <source>
        <dbReference type="SAM" id="MobiDB-lite"/>
    </source>
</evidence>
<evidence type="ECO:0000305" key="3"/>
<keyword id="KW-0488">Methylation</keyword>
<keyword id="KW-0687">Ribonucleoprotein</keyword>
<keyword id="KW-0689">Ribosomal protein</keyword>
<keyword id="KW-0694">RNA-binding</keyword>
<keyword id="KW-0699">rRNA-binding</keyword>
<feature type="chain" id="PRO_0000077126" description="Large ribosomal subunit protein uL3">
    <location>
        <begin position="1"/>
        <end position="214"/>
    </location>
</feature>
<feature type="region of interest" description="Disordered" evidence="2">
    <location>
        <begin position="131"/>
        <end position="155"/>
    </location>
</feature>
<feature type="modified residue" description="N5-methylglutamine" evidence="1">
    <location>
        <position position="153"/>
    </location>
</feature>
<proteinExistence type="inferred from homology"/>